<evidence type="ECO:0000269" key="1">
    <source>
    </source>
</evidence>
<evidence type="ECO:0000303" key="2">
    <source>
    </source>
</evidence>
<evidence type="ECO:0000305" key="3"/>
<name>CWP18_TOBAC</name>
<organism>
    <name type="scientific">Nicotiana tabacum</name>
    <name type="common">Common tobacco</name>
    <dbReference type="NCBI Taxonomy" id="4097"/>
    <lineage>
        <taxon>Eukaryota</taxon>
        <taxon>Viridiplantae</taxon>
        <taxon>Streptophyta</taxon>
        <taxon>Embryophyta</taxon>
        <taxon>Tracheophyta</taxon>
        <taxon>Spermatophyta</taxon>
        <taxon>Magnoliopsida</taxon>
        <taxon>eudicotyledons</taxon>
        <taxon>Gunneridae</taxon>
        <taxon>Pentapetalae</taxon>
        <taxon>asterids</taxon>
        <taxon>lamiids</taxon>
        <taxon>Solanales</taxon>
        <taxon>Solanaceae</taxon>
        <taxon>Nicotianoideae</taxon>
        <taxon>Nicotianeae</taxon>
        <taxon>Nicotiana</taxon>
    </lineage>
</organism>
<keyword id="KW-0134">Cell wall</keyword>
<keyword id="KW-0903">Direct protein sequencing</keyword>
<keyword id="KW-1185">Reference proteome</keyword>
<keyword id="KW-0964">Secreted</keyword>
<comment type="subcellular location">
    <subcellularLocation>
        <location evidence="1">Secreted</location>
        <location evidence="1">Cell wall</location>
    </subcellularLocation>
</comment>
<protein>
    <recommendedName>
        <fullName>15 kDa cell wall protein</fullName>
    </recommendedName>
</protein>
<sequence>TIEEVLNLPPYVVAA</sequence>
<reference evidence="3" key="1">
    <citation type="journal article" date="1997" name="J. Biol. Chem.">
        <title>Differential extraction and protein sequencing reveals major differences in patterns of primary cell wall proteins from plants.</title>
        <authorList>
            <person name="Robertson D."/>
            <person name="Mitchell G.P."/>
            <person name="Gilroy J.S."/>
            <person name="Gerrish C."/>
            <person name="Bolwell G.P."/>
            <person name="Slabas A.R."/>
        </authorList>
    </citation>
    <scope>PROTEIN SEQUENCE</scope>
    <scope>SUBCELLULAR LOCATION</scope>
</reference>
<accession>P80795</accession>
<dbReference type="PaxDb" id="4097-P80795"/>
<dbReference type="Proteomes" id="UP000084051">
    <property type="component" value="Unplaced"/>
</dbReference>
<dbReference type="GO" id="GO:0005576">
    <property type="term" value="C:extracellular region"/>
    <property type="evidence" value="ECO:0007669"/>
    <property type="project" value="UniProtKB-KW"/>
</dbReference>
<proteinExistence type="evidence at protein level"/>
<feature type="chain" id="PRO_0000079686" description="15 kDa cell wall protein">
    <location>
        <begin position="1"/>
        <end position="15" status="greater than"/>
    </location>
</feature>
<feature type="non-terminal residue" evidence="2">
    <location>
        <position position="15"/>
    </location>
</feature>